<accession>P9WJU0</accession>
<accession>L0T8N6</accession>
<accession>O50439</accession>
<accession>P65372</accession>
<proteinExistence type="inferred from homology"/>
<sequence>MVGCWVALALVLPMAVPSLAEMAQRHPVAVLPADAPSSVAVRQMAEAFHESGSENILVVLLTDEKGLGAADENVYHTLVDRLRNDAKDVVMLQDFLTTPPLREVLGSKDGKAWILPIGLAGDLGTPKSYHAYTDVERIVKRTVAGTTLTANVTGPAATVADLTDAGARDRASIELAIAVMLLVILMVIYRNPVTMLLPLVTIGASLMTAQALVAGVSLVGGLAVSNQAIVLLSAMIAGAGTDYAVFLISRYHEYVRLGEHPERAVQRAMMSVGKVIAASAATVGITFLGMRFAKLGVFSTVGPALAIGIAVSFLAAVTLLPAILVLASPRGWVAPRGERMATFWRRAGTRIVRRPKAYLGASLIGLVALASCASLAHFNYDDRKQLPPSDPSSVGYAAMEHHFSVNQTIPEYLIIHSAHDLRTPRGLADLEQLAQRVSQIPGVAMVRGVTRPNGETLEQARATYQAGQVGNRLGGASRMIDERTGDLNRLASGANLLADNLGDVRGQVSRAVAGVRSLVDALAYIQNQFGGNKTFNEIDNAARLVSNIHALGDALQVNFDGIANSFDWLDSVVAALDTSPVCDSNPMCGNARVQFHKLQTARDNGTLDKVVGLARQLQSTRSPQTVSAVVNDLGRSLNSVVRSLKSLGLDNPDAARARLISMQNGANDLASAGRQVADGVQMLVDQTKNMGIGLNQASAFLMAMGNDASQPSMAGFNVPPQVLKSEEFKKVAQAFISPDGHTVRYFIQTDLNPFSTAAMDQVNTIIDTAKGAQPNTSLADASISMSGYPVMLRDIRDYYERDMRLIVAVTVVVVILILMALLRAIVAPLYLVGSVVISYMSAIGLGVVVFQVFLGQELHWSVPGLAFVVLVAVGADYNMLLASRLRDESALGVRSSVIRTVRCTGGVITAAGLIFAASMSGLLFSSIGTVVQGGFIIGVGILIDTFVVRTITVPAMATLLGRASWWPGHPWQRCAPEEGQMSARMSARTKTVFQAVADGSKR</sequence>
<keyword id="KW-0997">Cell inner membrane</keyword>
<keyword id="KW-1003">Cell membrane</keyword>
<keyword id="KW-0445">Lipid transport</keyword>
<keyword id="KW-0472">Membrane</keyword>
<keyword id="KW-1185">Reference proteome</keyword>
<keyword id="KW-0812">Transmembrane</keyword>
<keyword id="KW-1133">Transmembrane helix</keyword>
<keyword id="KW-0813">Transport</keyword>
<reference key="1">
    <citation type="journal article" date="2002" name="J. Bacteriol.">
        <title>Whole-genome comparison of Mycobacterium tuberculosis clinical and laboratory strains.</title>
        <authorList>
            <person name="Fleischmann R.D."/>
            <person name="Alland D."/>
            <person name="Eisen J.A."/>
            <person name="Carpenter L."/>
            <person name="White O."/>
            <person name="Peterson J.D."/>
            <person name="DeBoy R.T."/>
            <person name="Dodson R.J."/>
            <person name="Gwinn M.L."/>
            <person name="Haft D.H."/>
            <person name="Hickey E.K."/>
            <person name="Kolonay J.F."/>
            <person name="Nelson W.C."/>
            <person name="Umayam L.A."/>
            <person name="Ermolaeva M.D."/>
            <person name="Salzberg S.L."/>
            <person name="Delcher A."/>
            <person name="Utterback T.R."/>
            <person name="Weidman J.F."/>
            <person name="Khouri H.M."/>
            <person name="Gill J."/>
            <person name="Mikula A."/>
            <person name="Bishai W."/>
            <person name="Jacobs W.R. Jr."/>
            <person name="Venter J.C."/>
            <person name="Fraser C.M."/>
        </authorList>
    </citation>
    <scope>NUCLEOTIDE SEQUENCE [LARGE SCALE GENOMIC DNA]</scope>
    <source>
        <strain>CDC 1551 / Oshkosh</strain>
    </source>
</reference>
<dbReference type="EMBL" id="AE000516">
    <property type="protein sequence ID" value="AAK45477.1"/>
    <property type="molecule type" value="Genomic_DNA"/>
</dbReference>
<dbReference type="PIR" id="G70876">
    <property type="entry name" value="G70876"/>
</dbReference>
<dbReference type="SMR" id="P9WJU0"/>
<dbReference type="KEGG" id="mtc:MT1220"/>
<dbReference type="PATRIC" id="fig|83331.31.peg.1319"/>
<dbReference type="HOGENOM" id="CLU_005108_3_0_11"/>
<dbReference type="Proteomes" id="UP000001020">
    <property type="component" value="Chromosome"/>
</dbReference>
<dbReference type="GO" id="GO:0005886">
    <property type="term" value="C:plasma membrane"/>
    <property type="evidence" value="ECO:0007669"/>
    <property type="project" value="UniProtKB-SubCell"/>
</dbReference>
<dbReference type="GO" id="GO:0006869">
    <property type="term" value="P:lipid transport"/>
    <property type="evidence" value="ECO:0007669"/>
    <property type="project" value="UniProtKB-KW"/>
</dbReference>
<dbReference type="FunFam" id="1.20.1640.10:FF:000018">
    <property type="entry name" value="Transmembrane transport protein MmpL10"/>
    <property type="match status" value="1"/>
</dbReference>
<dbReference type="FunFam" id="1.20.1640.10:FF:000020">
    <property type="entry name" value="Transmembrane transport protein MmpL10"/>
    <property type="match status" value="1"/>
</dbReference>
<dbReference type="Gene3D" id="1.20.1640.10">
    <property type="entry name" value="Multidrug efflux transporter AcrB transmembrane domain"/>
    <property type="match status" value="2"/>
</dbReference>
<dbReference type="InterPro" id="IPR004869">
    <property type="entry name" value="MMPL_dom"/>
</dbReference>
<dbReference type="InterPro" id="IPR004707">
    <property type="entry name" value="MmpL_fam"/>
</dbReference>
<dbReference type="InterPro" id="IPR050545">
    <property type="entry name" value="Mycobact_MmpL"/>
</dbReference>
<dbReference type="NCBIfam" id="TIGR00833">
    <property type="entry name" value="actII"/>
    <property type="match status" value="1"/>
</dbReference>
<dbReference type="PANTHER" id="PTHR33406">
    <property type="entry name" value="MEMBRANE PROTEIN MJ1562-RELATED"/>
    <property type="match status" value="1"/>
</dbReference>
<dbReference type="PANTHER" id="PTHR33406:SF6">
    <property type="entry name" value="MEMBRANE PROTEIN YDGH-RELATED"/>
    <property type="match status" value="1"/>
</dbReference>
<dbReference type="Pfam" id="PF03176">
    <property type="entry name" value="MMPL"/>
    <property type="match status" value="2"/>
</dbReference>
<dbReference type="SUPFAM" id="SSF82866">
    <property type="entry name" value="Multidrug efflux transporter AcrB transmembrane domain"/>
    <property type="match status" value="2"/>
</dbReference>
<evidence type="ECO:0000250" key="1">
    <source>
        <dbReference type="UniProtKB" id="P9WJU1"/>
    </source>
</evidence>
<evidence type="ECO:0000255" key="2"/>
<evidence type="ECO:0000305" key="3"/>
<gene>
    <name type="primary">mmpL10</name>
    <name type="ordered locus">MT1220</name>
</gene>
<feature type="chain" id="PRO_0000427771" description="Acyltrehalose exporter MmpL10">
    <location>
        <begin position="1"/>
        <end position="1002"/>
    </location>
</feature>
<feature type="transmembrane region" description="Helical" evidence="2">
    <location>
        <begin position="1"/>
        <end position="21"/>
    </location>
</feature>
<feature type="transmembrane region" description="Helical" evidence="2">
    <location>
        <begin position="177"/>
        <end position="197"/>
    </location>
</feature>
<feature type="transmembrane region" description="Helical" evidence="2">
    <location>
        <begin position="199"/>
        <end position="219"/>
    </location>
</feature>
<feature type="transmembrane region" description="Helical" evidence="2">
    <location>
        <begin position="228"/>
        <end position="248"/>
    </location>
</feature>
<feature type="transmembrane region" description="Helical" evidence="2">
    <location>
        <begin position="268"/>
        <end position="288"/>
    </location>
</feature>
<feature type="transmembrane region" description="Helical" evidence="2">
    <location>
        <begin position="306"/>
        <end position="326"/>
    </location>
</feature>
<feature type="transmembrane region" description="Helical" evidence="2">
    <location>
        <begin position="358"/>
        <end position="378"/>
    </location>
</feature>
<feature type="transmembrane region" description="Helical" evidence="2">
    <location>
        <begin position="806"/>
        <end position="826"/>
    </location>
</feature>
<feature type="transmembrane region" description="Helical" evidence="2">
    <location>
        <begin position="835"/>
        <end position="855"/>
    </location>
</feature>
<feature type="transmembrane region" description="Helical" evidence="2">
    <location>
        <begin position="862"/>
        <end position="882"/>
    </location>
</feature>
<feature type="transmembrane region" description="Helical" evidence="2">
    <location>
        <begin position="901"/>
        <end position="921"/>
    </location>
</feature>
<feature type="transmembrane region" description="Helical" evidence="2">
    <location>
        <begin position="923"/>
        <end position="943"/>
    </location>
</feature>
<comment type="function">
    <text evidence="1">Required for the biosynthesis of polyacyltrehalose (PAT) and the transport of diacyltrehalose (DAT) and possibly PAT to the cell surface.</text>
</comment>
<comment type="subcellular location">
    <subcellularLocation>
        <location evidence="1">Cell inner membrane</location>
        <topology evidence="2">Multi-pass membrane protein</topology>
    </subcellularLocation>
</comment>
<comment type="similarity">
    <text evidence="3">Belongs to the resistance-nodulation-cell division (RND) (TC 2.A.6) family. MmpL subfamily.</text>
</comment>
<name>MMPLA_MYCTO</name>
<organism>
    <name type="scientific">Mycobacterium tuberculosis (strain CDC 1551 / Oshkosh)</name>
    <dbReference type="NCBI Taxonomy" id="83331"/>
    <lineage>
        <taxon>Bacteria</taxon>
        <taxon>Bacillati</taxon>
        <taxon>Actinomycetota</taxon>
        <taxon>Actinomycetes</taxon>
        <taxon>Mycobacteriales</taxon>
        <taxon>Mycobacteriaceae</taxon>
        <taxon>Mycobacterium</taxon>
        <taxon>Mycobacterium tuberculosis complex</taxon>
    </lineage>
</organism>
<protein>
    <recommendedName>
        <fullName evidence="1">Acyltrehalose exporter MmpL10</fullName>
    </recommendedName>
</protein>